<accession>P42435</accession>
<sequence length="805" mass="88432">MGKKQLVLVGNGMAGVRAIEEILSVAKDEFQITIFGAEPHPNYNRILLSKVLQGDTDIKDITLNDWDWYEENNIQLYTNETVIKVDTENKTVITDADRIQPYDELILATGSVPFILPIPGADKKGVTAFRDIKDTDTMLAASKQYKKAAVIGGGLLGLEAARGLLNLGMDVSVIHLAPFLMERQLDATAGRLLQNELEKQGMTFLLEKQTEEIVGDDRVEGLRFKDGTSIEADLVVMAVGIRPNTTLGAESGIPVNRGIIVNDYMQTEIPHIYAVGECAEHRGIAYGLVAPLYEQAKVLAKHMCGIETKPYEGSVLSTQLKVSGVEVFSAGDFNESEEKKAIKVFDEQDGIYKKIVLRGNQIVGAVLFGDSSEGNRLFSMIQKEADISETSKISILQPLSQEAGTSITAAMSDDEIICGCNGVSKGAIIQAIQEKGCSSTDEIKACTGASRSCGGCKPLVEEILQHTLGSDFDASAQKEAICGCTTLSRDEVVEEIKAKGLSHTREVMNVLGWKTPEGCSKCRPALNYYLGMINPTKYEDDRTSRFVNERMHANIQKDGTYSVVPRMYGGVTNSTDLRKIADVVDKYEIPLVKMTGGQRIDLIGVKKEDLPKVWEDLDMPSGYAYGKTLRTVKTCVGEQFCRFGTQDSMALGIALEKKFEGLNTPHKVKMAVSACPRNCAESGIKDLGVVGIDGGWELYVGGNGGTHLRAGDLLMKVKTNEEVLEYAGAYLQYYRETANYLERTSAWLERVGLSHVQSVLNDPEKRQELNGRMNETLSVHKDPWKDFLEDKQTSKELFENVVTTS</sequence>
<name>NASD_BACSU</name>
<organism>
    <name type="scientific">Bacillus subtilis (strain 168)</name>
    <dbReference type="NCBI Taxonomy" id="224308"/>
    <lineage>
        <taxon>Bacteria</taxon>
        <taxon>Bacillati</taxon>
        <taxon>Bacillota</taxon>
        <taxon>Bacilli</taxon>
        <taxon>Bacillales</taxon>
        <taxon>Bacillaceae</taxon>
        <taxon>Bacillus</taxon>
    </lineage>
</organism>
<gene>
    <name type="primary">nasD</name>
    <name type="synonym">nasBC</name>
    <name type="synonym">nirB</name>
    <name type="ordered locus">BSU03300</name>
</gene>
<reference key="1">
    <citation type="journal article" date="1995" name="J. Bacteriol.">
        <title>The nasB operon and nasA gene are required for nitrate/nitrite assimilation in Bacillus subtilis.</title>
        <authorList>
            <person name="Ogawa K."/>
            <person name="Akagawa E."/>
            <person name="Yamane K."/>
            <person name="Sun Z.-W."/>
            <person name="Lacelle M."/>
            <person name="Zuber P."/>
            <person name="Nakano M.M."/>
        </authorList>
    </citation>
    <scope>NUCLEOTIDE SEQUENCE [GENOMIC DNA]</scope>
    <scope>FUNCTION</scope>
    <source>
        <strain>168</strain>
    </source>
</reference>
<reference key="2">
    <citation type="journal article" date="1996" name="Microbiology">
        <title>The 25 degrees-36 degrees region of the Bacillus subtilis chromosome: determination of the sequence of a 146 kb segment and identification of 113 genes.</title>
        <authorList>
            <person name="Yamane K."/>
            <person name="Kumano M."/>
            <person name="Kurita K."/>
        </authorList>
    </citation>
    <scope>NUCLEOTIDE SEQUENCE [GENOMIC DNA]</scope>
    <source>
        <strain>168</strain>
    </source>
</reference>
<reference key="3">
    <citation type="journal article" date="1997" name="Nature">
        <title>The complete genome sequence of the Gram-positive bacterium Bacillus subtilis.</title>
        <authorList>
            <person name="Kunst F."/>
            <person name="Ogasawara N."/>
            <person name="Moszer I."/>
            <person name="Albertini A.M."/>
            <person name="Alloni G."/>
            <person name="Azevedo V."/>
            <person name="Bertero M.G."/>
            <person name="Bessieres P."/>
            <person name="Bolotin A."/>
            <person name="Borchert S."/>
            <person name="Borriss R."/>
            <person name="Boursier L."/>
            <person name="Brans A."/>
            <person name="Braun M."/>
            <person name="Brignell S.C."/>
            <person name="Bron S."/>
            <person name="Brouillet S."/>
            <person name="Bruschi C.V."/>
            <person name="Caldwell B."/>
            <person name="Capuano V."/>
            <person name="Carter N.M."/>
            <person name="Choi S.-K."/>
            <person name="Codani J.-J."/>
            <person name="Connerton I.F."/>
            <person name="Cummings N.J."/>
            <person name="Daniel R.A."/>
            <person name="Denizot F."/>
            <person name="Devine K.M."/>
            <person name="Duesterhoeft A."/>
            <person name="Ehrlich S.D."/>
            <person name="Emmerson P.T."/>
            <person name="Entian K.-D."/>
            <person name="Errington J."/>
            <person name="Fabret C."/>
            <person name="Ferrari E."/>
            <person name="Foulger D."/>
            <person name="Fritz C."/>
            <person name="Fujita M."/>
            <person name="Fujita Y."/>
            <person name="Fuma S."/>
            <person name="Galizzi A."/>
            <person name="Galleron N."/>
            <person name="Ghim S.-Y."/>
            <person name="Glaser P."/>
            <person name="Goffeau A."/>
            <person name="Golightly E.J."/>
            <person name="Grandi G."/>
            <person name="Guiseppi G."/>
            <person name="Guy B.J."/>
            <person name="Haga K."/>
            <person name="Haiech J."/>
            <person name="Harwood C.R."/>
            <person name="Henaut A."/>
            <person name="Hilbert H."/>
            <person name="Holsappel S."/>
            <person name="Hosono S."/>
            <person name="Hullo M.-F."/>
            <person name="Itaya M."/>
            <person name="Jones L.-M."/>
            <person name="Joris B."/>
            <person name="Karamata D."/>
            <person name="Kasahara Y."/>
            <person name="Klaerr-Blanchard M."/>
            <person name="Klein C."/>
            <person name="Kobayashi Y."/>
            <person name="Koetter P."/>
            <person name="Koningstein G."/>
            <person name="Krogh S."/>
            <person name="Kumano M."/>
            <person name="Kurita K."/>
            <person name="Lapidus A."/>
            <person name="Lardinois S."/>
            <person name="Lauber J."/>
            <person name="Lazarevic V."/>
            <person name="Lee S.-M."/>
            <person name="Levine A."/>
            <person name="Liu H."/>
            <person name="Masuda S."/>
            <person name="Mauel C."/>
            <person name="Medigue C."/>
            <person name="Medina N."/>
            <person name="Mellado R.P."/>
            <person name="Mizuno M."/>
            <person name="Moestl D."/>
            <person name="Nakai S."/>
            <person name="Noback M."/>
            <person name="Noone D."/>
            <person name="O'Reilly M."/>
            <person name="Ogawa K."/>
            <person name="Ogiwara A."/>
            <person name="Oudega B."/>
            <person name="Park S.-H."/>
            <person name="Parro V."/>
            <person name="Pohl T.M."/>
            <person name="Portetelle D."/>
            <person name="Porwollik S."/>
            <person name="Prescott A.M."/>
            <person name="Presecan E."/>
            <person name="Pujic P."/>
            <person name="Purnelle B."/>
            <person name="Rapoport G."/>
            <person name="Rey M."/>
            <person name="Reynolds S."/>
            <person name="Rieger M."/>
            <person name="Rivolta C."/>
            <person name="Rocha E."/>
            <person name="Roche B."/>
            <person name="Rose M."/>
            <person name="Sadaie Y."/>
            <person name="Sato T."/>
            <person name="Scanlan E."/>
            <person name="Schleich S."/>
            <person name="Schroeter R."/>
            <person name="Scoffone F."/>
            <person name="Sekiguchi J."/>
            <person name="Sekowska A."/>
            <person name="Seror S.J."/>
            <person name="Serror P."/>
            <person name="Shin B.-S."/>
            <person name="Soldo B."/>
            <person name="Sorokin A."/>
            <person name="Tacconi E."/>
            <person name="Takagi T."/>
            <person name="Takahashi H."/>
            <person name="Takemaru K."/>
            <person name="Takeuchi M."/>
            <person name="Tamakoshi A."/>
            <person name="Tanaka T."/>
            <person name="Terpstra P."/>
            <person name="Tognoni A."/>
            <person name="Tosato V."/>
            <person name="Uchiyama S."/>
            <person name="Vandenbol M."/>
            <person name="Vannier F."/>
            <person name="Vassarotti A."/>
            <person name="Viari A."/>
            <person name="Wambutt R."/>
            <person name="Wedler E."/>
            <person name="Wedler H."/>
            <person name="Weitzenegger T."/>
            <person name="Winters P."/>
            <person name="Wipat A."/>
            <person name="Yamamoto H."/>
            <person name="Yamane K."/>
            <person name="Yasumoto K."/>
            <person name="Yata K."/>
            <person name="Yoshida K."/>
            <person name="Yoshikawa H.-F."/>
            <person name="Zumstein E."/>
            <person name="Yoshikawa H."/>
            <person name="Danchin A."/>
        </authorList>
    </citation>
    <scope>NUCLEOTIDE SEQUENCE [LARGE SCALE GENOMIC DNA]</scope>
    <source>
        <strain>168</strain>
    </source>
</reference>
<reference key="4">
    <citation type="journal article" date="2000" name="J. Mol. Biol.">
        <title>Purification and in vitro activities of the Bacillus subtilis TnrA transcription factor.</title>
        <authorList>
            <person name="Wray L.V. Jr."/>
            <person name="Zalieckas J.M."/>
            <person name="Fisher S.H."/>
        </authorList>
    </citation>
    <scope>INDUCTION BY TNRA</scope>
    <source>
        <strain>168</strain>
    </source>
</reference>
<reference key="5">
    <citation type="journal article" date="2001" name="J. Bacteriol.">
        <title>Modulation of anaerobic energy metabolism of Bacillus subtilis by arfM (ywiD).</title>
        <authorList>
            <person name="Marino M."/>
            <person name="Cruz Ramos H."/>
            <person name="Hoffmann T."/>
            <person name="Glaser P."/>
            <person name="Jahn D."/>
        </authorList>
    </citation>
    <scope>INDUCTION BY ARFM</scope>
    <source>
        <strain>168</strain>
    </source>
</reference>
<reference key="6">
    <citation type="journal article" date="2003" name="Mol. Microbiol.">
        <title>Identification of additional TnrA-regulated genes of Bacillus subtilis associated with a TnrA box.</title>
        <authorList>
            <person name="Yoshida K."/>
            <person name="Yamaguchi H."/>
            <person name="Kinehara M."/>
            <person name="Ohki Y.-H."/>
            <person name="Nakaura Y."/>
            <person name="Fujita Y."/>
        </authorList>
    </citation>
    <scope>INDUCTION BY TNRA</scope>
</reference>
<keyword id="KW-0001">2Fe-2S</keyword>
<keyword id="KW-0004">4Fe-4S</keyword>
<keyword id="KW-0274">FAD</keyword>
<keyword id="KW-0285">Flavoprotein</keyword>
<keyword id="KW-0349">Heme</keyword>
<keyword id="KW-0408">Iron</keyword>
<keyword id="KW-0411">Iron-sulfur</keyword>
<keyword id="KW-0479">Metal-binding</keyword>
<keyword id="KW-0521">NADP</keyword>
<keyword id="KW-0534">Nitrate assimilation</keyword>
<keyword id="KW-0560">Oxidoreductase</keyword>
<keyword id="KW-1185">Reference proteome</keyword>
<dbReference type="EC" id="1.7.1.4"/>
<dbReference type="EMBL" id="D30689">
    <property type="protein sequence ID" value="BAA06354.1"/>
    <property type="molecule type" value="Genomic_DNA"/>
</dbReference>
<dbReference type="EMBL" id="D50453">
    <property type="protein sequence ID" value="BAA08964.1"/>
    <property type="molecule type" value="Genomic_DNA"/>
</dbReference>
<dbReference type="EMBL" id="AL009126">
    <property type="protein sequence ID" value="CAB12124.1"/>
    <property type="molecule type" value="Genomic_DNA"/>
</dbReference>
<dbReference type="PIR" id="I40029">
    <property type="entry name" value="I40029"/>
</dbReference>
<dbReference type="RefSeq" id="NP_388212.1">
    <property type="nucleotide sequence ID" value="NC_000964.3"/>
</dbReference>
<dbReference type="RefSeq" id="WP_003234637.1">
    <property type="nucleotide sequence ID" value="NZ_OZ025638.1"/>
</dbReference>
<dbReference type="SMR" id="P42435"/>
<dbReference type="FunCoup" id="P42435">
    <property type="interactions" value="262"/>
</dbReference>
<dbReference type="STRING" id="224308.BSU03300"/>
<dbReference type="jPOST" id="P42435"/>
<dbReference type="PaxDb" id="224308-BSU03300"/>
<dbReference type="EnsemblBacteria" id="CAB12124">
    <property type="protein sequence ID" value="CAB12124"/>
    <property type="gene ID" value="BSU_03300"/>
</dbReference>
<dbReference type="GeneID" id="938329"/>
<dbReference type="KEGG" id="bsu:BSU03300"/>
<dbReference type="PATRIC" id="fig|224308.179.peg.344"/>
<dbReference type="eggNOG" id="COG1251">
    <property type="taxonomic scope" value="Bacteria"/>
</dbReference>
<dbReference type="InParanoid" id="P42435"/>
<dbReference type="OrthoDB" id="9792592at2"/>
<dbReference type="PhylomeDB" id="P42435"/>
<dbReference type="BioCyc" id="BSUB:BSU03300-MONOMER"/>
<dbReference type="UniPathway" id="UPA00653"/>
<dbReference type="Proteomes" id="UP000001570">
    <property type="component" value="Chromosome"/>
</dbReference>
<dbReference type="GO" id="GO:0051537">
    <property type="term" value="F:2 iron, 2 sulfur cluster binding"/>
    <property type="evidence" value="ECO:0007669"/>
    <property type="project" value="UniProtKB-KW"/>
</dbReference>
<dbReference type="GO" id="GO:0051539">
    <property type="term" value="F:4 iron, 4 sulfur cluster binding"/>
    <property type="evidence" value="ECO:0007669"/>
    <property type="project" value="UniProtKB-KW"/>
</dbReference>
<dbReference type="GO" id="GO:0050660">
    <property type="term" value="F:flavin adenine dinucleotide binding"/>
    <property type="evidence" value="ECO:0007669"/>
    <property type="project" value="InterPro"/>
</dbReference>
<dbReference type="GO" id="GO:0020037">
    <property type="term" value="F:heme binding"/>
    <property type="evidence" value="ECO:0007669"/>
    <property type="project" value="InterPro"/>
</dbReference>
<dbReference type="GO" id="GO:0046872">
    <property type="term" value="F:metal ion binding"/>
    <property type="evidence" value="ECO:0007669"/>
    <property type="project" value="UniProtKB-KW"/>
</dbReference>
<dbReference type="GO" id="GO:0050661">
    <property type="term" value="F:NADP binding"/>
    <property type="evidence" value="ECO:0007669"/>
    <property type="project" value="InterPro"/>
</dbReference>
<dbReference type="GO" id="GO:0106316">
    <property type="term" value="F:nitrite reductase NADH activity"/>
    <property type="evidence" value="ECO:0007669"/>
    <property type="project" value="RHEA"/>
</dbReference>
<dbReference type="GO" id="GO:0042128">
    <property type="term" value="P:nitrate assimilation"/>
    <property type="evidence" value="ECO:0007669"/>
    <property type="project" value="UniProtKB-UniPathway"/>
</dbReference>
<dbReference type="CDD" id="cd19943">
    <property type="entry name" value="NirB_Fer2_BFD-like_1"/>
    <property type="match status" value="1"/>
</dbReference>
<dbReference type="CDD" id="cd19944">
    <property type="entry name" value="NirB_Fer2_BFD-like_2"/>
    <property type="match status" value="1"/>
</dbReference>
<dbReference type="FunFam" id="3.50.50.60:FF:000033">
    <property type="entry name" value="Nitrite reductase [NAD(P)H], large subunit"/>
    <property type="match status" value="1"/>
</dbReference>
<dbReference type="FunFam" id="1.10.10.1100:FF:000002">
    <property type="entry name" value="Nitrite reductase large subunit"/>
    <property type="match status" value="1"/>
</dbReference>
<dbReference type="FunFam" id="3.30.390.30:FF:000015">
    <property type="entry name" value="Nitrite reductase large subunit"/>
    <property type="match status" value="1"/>
</dbReference>
<dbReference type="FunFam" id="3.30.413.10:FF:000017">
    <property type="entry name" value="Nitrite reductase large subunit"/>
    <property type="match status" value="1"/>
</dbReference>
<dbReference type="Gene3D" id="3.30.390.30">
    <property type="match status" value="1"/>
</dbReference>
<dbReference type="Gene3D" id="1.10.10.1100">
    <property type="entry name" value="BFD-like [2Fe-2S]-binding domain"/>
    <property type="match status" value="1"/>
</dbReference>
<dbReference type="Gene3D" id="3.50.50.60">
    <property type="entry name" value="FAD/NAD(P)-binding domain"/>
    <property type="match status" value="2"/>
</dbReference>
<dbReference type="Gene3D" id="3.30.413.10">
    <property type="entry name" value="Sulfite Reductase Hemoprotein, domain 1"/>
    <property type="match status" value="1"/>
</dbReference>
<dbReference type="Gene3D" id="3.90.480.10">
    <property type="entry name" value="Sulfite Reductase Hemoprotein,Domain 2"/>
    <property type="match status" value="1"/>
</dbReference>
<dbReference type="InterPro" id="IPR007419">
    <property type="entry name" value="BFD-like_2Fe2S-bd_dom"/>
</dbReference>
<dbReference type="InterPro" id="IPR041854">
    <property type="entry name" value="BFD-like_2Fe2S-bd_dom_sf"/>
</dbReference>
<dbReference type="InterPro" id="IPR036188">
    <property type="entry name" value="FAD/NAD-bd_sf"/>
</dbReference>
<dbReference type="InterPro" id="IPR023753">
    <property type="entry name" value="FAD/NAD-binding_dom"/>
</dbReference>
<dbReference type="InterPro" id="IPR016156">
    <property type="entry name" value="FAD/NAD-linked_Rdtase_dimer_sf"/>
</dbReference>
<dbReference type="InterPro" id="IPR052034">
    <property type="entry name" value="NasD-like"/>
</dbReference>
<dbReference type="InterPro" id="IPR005117">
    <property type="entry name" value="NiRdtase/SiRdtase_haem-b_fer"/>
</dbReference>
<dbReference type="InterPro" id="IPR036136">
    <property type="entry name" value="Nit/Sulf_reduc_fer-like_dom_sf"/>
</dbReference>
<dbReference type="InterPro" id="IPR012744">
    <property type="entry name" value="Nitri_red_NirB"/>
</dbReference>
<dbReference type="InterPro" id="IPR017121">
    <property type="entry name" value="Nitrite_Rdtase_lsu"/>
</dbReference>
<dbReference type="InterPro" id="IPR006067">
    <property type="entry name" value="NO2/SO3_Rdtase_4Fe4S_dom"/>
</dbReference>
<dbReference type="InterPro" id="IPR045854">
    <property type="entry name" value="NO2/SO3_Rdtase_4Fe4S_sf"/>
</dbReference>
<dbReference type="InterPro" id="IPR006066">
    <property type="entry name" value="NO2/SO3_Rdtase_FeS/sirohaem_BS"/>
</dbReference>
<dbReference type="InterPro" id="IPR041575">
    <property type="entry name" value="Rubredoxin_C"/>
</dbReference>
<dbReference type="NCBIfam" id="TIGR02374">
    <property type="entry name" value="nitri_red_nirB"/>
    <property type="match status" value="1"/>
</dbReference>
<dbReference type="PANTHER" id="PTHR43809">
    <property type="entry name" value="NITRITE REDUCTASE (NADH) LARGE SUBUNIT"/>
    <property type="match status" value="1"/>
</dbReference>
<dbReference type="PANTHER" id="PTHR43809:SF1">
    <property type="entry name" value="NITRITE REDUCTASE (NADH) LARGE SUBUNIT"/>
    <property type="match status" value="1"/>
</dbReference>
<dbReference type="Pfam" id="PF04324">
    <property type="entry name" value="Fer2_BFD"/>
    <property type="match status" value="2"/>
</dbReference>
<dbReference type="Pfam" id="PF01077">
    <property type="entry name" value="NIR_SIR"/>
    <property type="match status" value="1"/>
</dbReference>
<dbReference type="Pfam" id="PF03460">
    <property type="entry name" value="NIR_SIR_ferr"/>
    <property type="match status" value="1"/>
</dbReference>
<dbReference type="Pfam" id="PF07992">
    <property type="entry name" value="Pyr_redox_2"/>
    <property type="match status" value="1"/>
</dbReference>
<dbReference type="Pfam" id="PF18267">
    <property type="entry name" value="Rubredoxin_C"/>
    <property type="match status" value="1"/>
</dbReference>
<dbReference type="PIRSF" id="PIRSF037149">
    <property type="entry name" value="NirB"/>
    <property type="match status" value="1"/>
</dbReference>
<dbReference type="PRINTS" id="PR00368">
    <property type="entry name" value="FADPNR"/>
</dbReference>
<dbReference type="PRINTS" id="PR00411">
    <property type="entry name" value="PNDRDTASEI"/>
</dbReference>
<dbReference type="PRINTS" id="PR00397">
    <property type="entry name" value="SIROHAEM"/>
</dbReference>
<dbReference type="SUPFAM" id="SSF51905">
    <property type="entry name" value="FAD/NAD(P)-binding domain"/>
    <property type="match status" value="2"/>
</dbReference>
<dbReference type="SUPFAM" id="SSF56014">
    <property type="entry name" value="Nitrite and sulphite reductase 4Fe-4S domain-like"/>
    <property type="match status" value="1"/>
</dbReference>
<dbReference type="SUPFAM" id="SSF55124">
    <property type="entry name" value="Nitrite/Sulfite reductase N-terminal domain-like"/>
    <property type="match status" value="1"/>
</dbReference>
<comment type="function">
    <text evidence="7">Required for nitrite assimilation.</text>
</comment>
<comment type="catalytic activity">
    <reaction>
        <text>NH4(+) + 3 NADP(+) + 2 H2O = nitrite + 3 NADPH + 5 H(+)</text>
        <dbReference type="Rhea" id="RHEA:24632"/>
        <dbReference type="ChEBI" id="CHEBI:15377"/>
        <dbReference type="ChEBI" id="CHEBI:15378"/>
        <dbReference type="ChEBI" id="CHEBI:16301"/>
        <dbReference type="ChEBI" id="CHEBI:28938"/>
        <dbReference type="ChEBI" id="CHEBI:57783"/>
        <dbReference type="ChEBI" id="CHEBI:58349"/>
        <dbReference type="EC" id="1.7.1.4"/>
    </reaction>
</comment>
<comment type="catalytic activity">
    <reaction>
        <text>NH4(+) + 3 NAD(+) + 2 H2O = nitrite + 3 NADH + 5 H(+)</text>
        <dbReference type="Rhea" id="RHEA:24628"/>
        <dbReference type="ChEBI" id="CHEBI:15377"/>
        <dbReference type="ChEBI" id="CHEBI:15378"/>
        <dbReference type="ChEBI" id="CHEBI:16301"/>
        <dbReference type="ChEBI" id="CHEBI:28938"/>
        <dbReference type="ChEBI" id="CHEBI:57540"/>
        <dbReference type="ChEBI" id="CHEBI:57945"/>
        <dbReference type="EC" id="1.7.1.4"/>
    </reaction>
</comment>
<comment type="cofactor">
    <cofactor>
        <name>siroheme</name>
        <dbReference type="ChEBI" id="CHEBI:60052"/>
    </cofactor>
    <text>Binds 1 siroheme per subunit.</text>
</comment>
<comment type="cofactor">
    <cofactor evidence="2">
        <name>[2Fe-2S] cluster</name>
        <dbReference type="ChEBI" id="CHEBI:190135"/>
    </cofactor>
    <text evidence="2">Binds 1 [2Fe-2S] cluster per subunit.</text>
</comment>
<comment type="cofactor">
    <cofactor>
        <name>[4Fe-4S] cluster</name>
        <dbReference type="ChEBI" id="CHEBI:49883"/>
    </cofactor>
    <text>Binds 1 [4Fe-4S] cluster per subunit.</text>
</comment>
<comment type="cofactor">
    <cofactor>
        <name>FAD</name>
        <dbReference type="ChEBI" id="CHEBI:57692"/>
    </cofactor>
</comment>
<comment type="pathway">
    <text>Nitrogen metabolism; nitrate reduction (assimilation).</text>
</comment>
<comment type="subunit">
    <text evidence="1">Homodimer.</text>
</comment>
<comment type="induction">
    <text evidence="4 5 6">Positively regulated by TnrA under nitrogen-limited conditions. Induced by ArfM.</text>
</comment>
<comment type="similarity">
    <text evidence="8">Belongs to the nitrite and sulfite reductase 4Fe-4S domain family.</text>
</comment>
<feature type="chain" id="PRO_0000199961" description="Nitrite reductase [NAD(P)H]">
    <location>
        <begin position="1"/>
        <end position="805"/>
    </location>
</feature>
<feature type="binding site" evidence="3">
    <location>
        <begin position="43"/>
        <end position="79"/>
    </location>
    <ligand>
        <name>FAD</name>
        <dbReference type="ChEBI" id="CHEBI:57692"/>
    </ligand>
</feature>
<feature type="binding site" evidence="3">
    <location>
        <begin position="193"/>
        <end position="223"/>
    </location>
    <ligand>
        <name>NADP(+)</name>
        <dbReference type="ChEBI" id="CHEBI:58349"/>
    </ligand>
</feature>
<feature type="binding site" evidence="2">
    <location>
        <position position="418"/>
    </location>
    <ligand>
        <name>[2Fe-2S] cluster</name>
        <dbReference type="ChEBI" id="CHEBI:190135"/>
    </ligand>
</feature>
<feature type="binding site" evidence="2">
    <location>
        <position position="420"/>
    </location>
    <ligand>
        <name>[2Fe-2S] cluster</name>
        <dbReference type="ChEBI" id="CHEBI:190135"/>
    </ligand>
</feature>
<feature type="binding site" evidence="2">
    <location>
        <position position="453"/>
    </location>
    <ligand>
        <name>[2Fe-2S] cluster</name>
        <dbReference type="ChEBI" id="CHEBI:190135"/>
    </ligand>
</feature>
<feature type="binding site" evidence="2">
    <location>
        <position position="456"/>
    </location>
    <ligand>
        <name>[2Fe-2S] cluster</name>
        <dbReference type="ChEBI" id="CHEBI:190135"/>
    </ligand>
</feature>
<feature type="binding site" evidence="1">
    <location>
        <position position="635"/>
    </location>
    <ligand>
        <name>[4Fe-4S] cluster</name>
        <dbReference type="ChEBI" id="CHEBI:49883"/>
    </ligand>
</feature>
<feature type="binding site" evidence="1">
    <location>
        <position position="641"/>
    </location>
    <ligand>
        <name>[4Fe-4S] cluster</name>
        <dbReference type="ChEBI" id="CHEBI:49883"/>
    </ligand>
</feature>
<feature type="binding site" evidence="1">
    <location>
        <position position="675"/>
    </location>
    <ligand>
        <name>[4Fe-4S] cluster</name>
        <dbReference type="ChEBI" id="CHEBI:49883"/>
    </ligand>
</feature>
<feature type="binding site" evidence="1">
    <location>
        <position position="679"/>
    </location>
    <ligand>
        <name>[4Fe-4S] cluster</name>
        <dbReference type="ChEBI" id="CHEBI:49883"/>
    </ligand>
</feature>
<feature type="binding site" description="axial binding residue" evidence="1">
    <location>
        <position position="679"/>
    </location>
    <ligand>
        <name>siroheme</name>
        <dbReference type="ChEBI" id="CHEBI:60052"/>
    </ligand>
    <ligandPart>
        <name>Fe</name>
        <dbReference type="ChEBI" id="CHEBI:18248"/>
    </ligandPart>
</feature>
<protein>
    <recommendedName>
        <fullName>Nitrite reductase [NAD(P)H]</fullName>
        <ecNumber>1.7.1.4</ecNumber>
    </recommendedName>
</protein>
<proteinExistence type="evidence at transcript level"/>
<evidence type="ECO:0000250" key="1"/>
<evidence type="ECO:0000250" key="2">
    <source>
        <dbReference type="UniProtKB" id="P05340"/>
    </source>
</evidence>
<evidence type="ECO:0000255" key="3"/>
<evidence type="ECO:0000269" key="4">
    <source>
    </source>
</evidence>
<evidence type="ECO:0000269" key="5">
    <source>
    </source>
</evidence>
<evidence type="ECO:0000269" key="6">
    <source>
    </source>
</evidence>
<evidence type="ECO:0000269" key="7">
    <source>
    </source>
</evidence>
<evidence type="ECO:0000305" key="8"/>